<sequence>MSMSSIFSRPRLVVKKVLARAQNEGDGAIVRRSIGRPELQNLDPFLMLDEFSVSQPAGFPDHPHRGFETVTYMLQGAFTHQDFAGHKGTIRTGDVQWMTAGRGIVHSEMPAGPGTQKGLQLWINLSSKDKMIEPRYQELLHQDIPKAEKDGVSVTILAGESMGKKSQVFTRTPTMYLDFTLKPGSEHHQPIPETWNAFLYIVEGEGAFGSSDSTTTPAHHCLVLGPGEGLSVWNKSSKPLRFVLIGGQPINEPVVQYGPFVMNTKSEIMQAYQDYQLGKNGFERSRQWYSK</sequence>
<feature type="chain" id="PRO_0000214053" description="Pirin-like protein">
    <location>
        <begin position="1"/>
        <end position="291"/>
    </location>
</feature>
<keyword id="KW-0539">Nucleus</keyword>
<keyword id="KW-1185">Reference proteome</keyword>
<name>PIRL_SOLLC</name>
<dbReference type="EMBL" id="AF154003">
    <property type="protein sequence ID" value="AAF22236.1"/>
    <property type="molecule type" value="mRNA"/>
</dbReference>
<dbReference type="RefSeq" id="NP_001234292.1">
    <property type="nucleotide sequence ID" value="NM_001247363.2"/>
</dbReference>
<dbReference type="SMR" id="Q9SEE4"/>
<dbReference type="FunCoup" id="Q9SEE4">
    <property type="interactions" value="237"/>
</dbReference>
<dbReference type="STRING" id="4081.Q9SEE4"/>
<dbReference type="PaxDb" id="4081-Solyc09g098160.2.1"/>
<dbReference type="EnsemblPlants" id="Solyc09g098160.3.1">
    <property type="protein sequence ID" value="Solyc09g098160.3.1"/>
    <property type="gene ID" value="Solyc09g098160.3"/>
</dbReference>
<dbReference type="GeneID" id="543607"/>
<dbReference type="Gramene" id="Solyc09g098160.3.1">
    <property type="protein sequence ID" value="Solyc09g098160.3.1"/>
    <property type="gene ID" value="Solyc09g098160.3"/>
</dbReference>
<dbReference type="KEGG" id="sly:543607"/>
<dbReference type="eggNOG" id="ENOG502QQ5A">
    <property type="taxonomic scope" value="Eukaryota"/>
</dbReference>
<dbReference type="HOGENOM" id="CLU_045717_5_2_1"/>
<dbReference type="InParanoid" id="Q9SEE4"/>
<dbReference type="OMA" id="ININRNM"/>
<dbReference type="OrthoDB" id="198735at2759"/>
<dbReference type="PhylomeDB" id="Q9SEE4"/>
<dbReference type="Proteomes" id="UP000004994">
    <property type="component" value="Chromosome 9"/>
</dbReference>
<dbReference type="GO" id="GO:0005634">
    <property type="term" value="C:nucleus"/>
    <property type="evidence" value="ECO:0007669"/>
    <property type="project" value="UniProtKB-SubCell"/>
</dbReference>
<dbReference type="CDD" id="cd02247">
    <property type="entry name" value="cupin_pirin_C"/>
    <property type="match status" value="1"/>
</dbReference>
<dbReference type="CDD" id="cd02909">
    <property type="entry name" value="cupin_pirin_N"/>
    <property type="match status" value="1"/>
</dbReference>
<dbReference type="FunFam" id="2.60.120.10:FF:000055">
    <property type="entry name" value="pirin"/>
    <property type="match status" value="1"/>
</dbReference>
<dbReference type="Gene3D" id="2.60.120.10">
    <property type="entry name" value="Jelly Rolls"/>
    <property type="match status" value="2"/>
</dbReference>
<dbReference type="InterPro" id="IPR012093">
    <property type="entry name" value="Pirin"/>
</dbReference>
<dbReference type="InterPro" id="IPR008778">
    <property type="entry name" value="Pirin_C_dom"/>
</dbReference>
<dbReference type="InterPro" id="IPR003829">
    <property type="entry name" value="Pirin_N_dom"/>
</dbReference>
<dbReference type="InterPro" id="IPR014710">
    <property type="entry name" value="RmlC-like_jellyroll"/>
</dbReference>
<dbReference type="InterPro" id="IPR011051">
    <property type="entry name" value="RmlC_Cupin_sf"/>
</dbReference>
<dbReference type="PANTHER" id="PTHR13903:SF25">
    <property type="entry name" value="PIRIN-LIKE PROTEIN"/>
    <property type="match status" value="1"/>
</dbReference>
<dbReference type="PANTHER" id="PTHR13903">
    <property type="entry name" value="PIRIN-RELATED"/>
    <property type="match status" value="1"/>
</dbReference>
<dbReference type="Pfam" id="PF02678">
    <property type="entry name" value="Pirin"/>
    <property type="match status" value="1"/>
</dbReference>
<dbReference type="Pfam" id="PF05726">
    <property type="entry name" value="Pirin_C"/>
    <property type="match status" value="1"/>
</dbReference>
<dbReference type="PIRSF" id="PIRSF006232">
    <property type="entry name" value="Pirin"/>
    <property type="match status" value="1"/>
</dbReference>
<dbReference type="SUPFAM" id="SSF51182">
    <property type="entry name" value="RmlC-like cupins"/>
    <property type="match status" value="1"/>
</dbReference>
<evidence type="ECO:0000250" key="1"/>
<evidence type="ECO:0000305" key="2"/>
<accession>Q9SEE4</accession>
<organism>
    <name type="scientific">Solanum lycopersicum</name>
    <name type="common">Tomato</name>
    <name type="synonym">Lycopersicon esculentum</name>
    <dbReference type="NCBI Taxonomy" id="4081"/>
    <lineage>
        <taxon>Eukaryota</taxon>
        <taxon>Viridiplantae</taxon>
        <taxon>Streptophyta</taxon>
        <taxon>Embryophyta</taxon>
        <taxon>Tracheophyta</taxon>
        <taxon>Spermatophyta</taxon>
        <taxon>Magnoliopsida</taxon>
        <taxon>eudicotyledons</taxon>
        <taxon>Gunneridae</taxon>
        <taxon>Pentapetalae</taxon>
        <taxon>asterids</taxon>
        <taxon>lamiids</taxon>
        <taxon>Solanales</taxon>
        <taxon>Solanaceae</taxon>
        <taxon>Solanoideae</taxon>
        <taxon>Solaneae</taxon>
        <taxon>Solanum</taxon>
        <taxon>Solanum subgen. Lycopersicon</taxon>
    </lineage>
</organism>
<protein>
    <recommendedName>
        <fullName>Pirin-like protein</fullName>
    </recommendedName>
</protein>
<proteinExistence type="evidence at transcript level"/>
<reference key="1">
    <citation type="journal article" date="2001" name="Plant Mol. Biol.">
        <title>A tomato homologue of the human protein PIRIN is induced during programmed cell death.</title>
        <authorList>
            <person name="Orzaez D."/>
            <person name="de Jong A.J."/>
            <person name="Woltering E.J."/>
        </authorList>
    </citation>
    <scope>NUCLEOTIDE SEQUENCE [MRNA]</scope>
</reference>
<comment type="subcellular location">
    <subcellularLocation>
        <location evidence="1">Nucleus</location>
    </subcellularLocation>
</comment>
<comment type="similarity">
    <text evidence="2">Belongs to the pirin family.</text>
</comment>